<gene>
    <name evidence="1" type="primary">recA</name>
    <name type="ordered locus">LACR_0400</name>
</gene>
<accession>Q031W5</accession>
<protein>
    <recommendedName>
        <fullName evidence="1">Protein RecA</fullName>
    </recommendedName>
    <alternativeName>
        <fullName evidence="1">Recombinase A</fullName>
    </alternativeName>
</protein>
<keyword id="KW-0067">ATP-binding</keyword>
<keyword id="KW-0963">Cytoplasm</keyword>
<keyword id="KW-0227">DNA damage</keyword>
<keyword id="KW-0233">DNA recombination</keyword>
<keyword id="KW-0234">DNA repair</keyword>
<keyword id="KW-0238">DNA-binding</keyword>
<keyword id="KW-0547">Nucleotide-binding</keyword>
<keyword id="KW-0742">SOS response</keyword>
<name>RECA_LACLS</name>
<organism>
    <name type="scientific">Lactococcus lactis subsp. cremoris (strain SK11)</name>
    <dbReference type="NCBI Taxonomy" id="272622"/>
    <lineage>
        <taxon>Bacteria</taxon>
        <taxon>Bacillati</taxon>
        <taxon>Bacillota</taxon>
        <taxon>Bacilli</taxon>
        <taxon>Lactobacillales</taxon>
        <taxon>Streptococcaceae</taxon>
        <taxon>Lactococcus</taxon>
        <taxon>Lactococcus cremoris subsp. cremoris</taxon>
    </lineage>
</organism>
<reference key="1">
    <citation type="journal article" date="2006" name="Proc. Natl. Acad. Sci. U.S.A.">
        <title>Comparative genomics of the lactic acid bacteria.</title>
        <authorList>
            <person name="Makarova K.S."/>
            <person name="Slesarev A."/>
            <person name="Wolf Y.I."/>
            <person name="Sorokin A."/>
            <person name="Mirkin B."/>
            <person name="Koonin E.V."/>
            <person name="Pavlov A."/>
            <person name="Pavlova N."/>
            <person name="Karamychev V."/>
            <person name="Polouchine N."/>
            <person name="Shakhova V."/>
            <person name="Grigoriev I."/>
            <person name="Lou Y."/>
            <person name="Rohksar D."/>
            <person name="Lucas S."/>
            <person name="Huang K."/>
            <person name="Goodstein D.M."/>
            <person name="Hawkins T."/>
            <person name="Plengvidhya V."/>
            <person name="Welker D."/>
            <person name="Hughes J."/>
            <person name="Goh Y."/>
            <person name="Benson A."/>
            <person name="Baldwin K."/>
            <person name="Lee J.-H."/>
            <person name="Diaz-Muniz I."/>
            <person name="Dosti B."/>
            <person name="Smeianov V."/>
            <person name="Wechter W."/>
            <person name="Barabote R."/>
            <person name="Lorca G."/>
            <person name="Altermann E."/>
            <person name="Barrangou R."/>
            <person name="Ganesan B."/>
            <person name="Xie Y."/>
            <person name="Rawsthorne H."/>
            <person name="Tamir D."/>
            <person name="Parker C."/>
            <person name="Breidt F."/>
            <person name="Broadbent J.R."/>
            <person name="Hutkins R."/>
            <person name="O'Sullivan D."/>
            <person name="Steele J."/>
            <person name="Unlu G."/>
            <person name="Saier M.H. Jr."/>
            <person name="Klaenhammer T."/>
            <person name="Richardson P."/>
            <person name="Kozyavkin S."/>
            <person name="Weimer B.C."/>
            <person name="Mills D.A."/>
        </authorList>
    </citation>
    <scope>NUCLEOTIDE SEQUENCE [LARGE SCALE GENOMIC DNA]</scope>
    <source>
        <strain>SK11</strain>
    </source>
</reference>
<proteinExistence type="inferred from homology"/>
<evidence type="ECO:0000255" key="1">
    <source>
        <dbReference type="HAMAP-Rule" id="MF_00268"/>
    </source>
</evidence>
<evidence type="ECO:0000256" key="2">
    <source>
        <dbReference type="SAM" id="MobiDB-lite"/>
    </source>
</evidence>
<sequence length="387" mass="41380">MATKKKTNFDDITKKYGAERDKALADALALIEKDFGKGSLMRLGEAANQKVSVVSSGSLALDIALGAGGYPKGRIVEIYGPESSGKTTVALHAVAAVQKEGGIAAFIDAENALDPEYAKALGVNIDELLLSQPDYGEQGLQIAEKLITSGAVDLVVIDSVAALVPKAEIDGEIGDSSVGLQARMMSQAMRKLAGHINKTKTTAIFINQLREKVGVMFGSPETTPGGRALKFYASVRLDVRGSTKIEEGSGDNKTQIGKITKIKVVKNKVAPPFKVALVDIMFGEGISSTGELLNIAVEEGIIKKSGAWFAYNDEKIGQGAEKAKNYLKEHQDVFDEIDHKVRAAHGLLDDSEVAETEEETTASKTKAKAKKEEKAVETEEIELELED</sequence>
<feature type="chain" id="PRO_1000047939" description="Protein RecA">
    <location>
        <begin position="1"/>
        <end position="387"/>
    </location>
</feature>
<feature type="region of interest" description="Disordered" evidence="2">
    <location>
        <begin position="348"/>
        <end position="387"/>
    </location>
</feature>
<feature type="compositionally biased region" description="Acidic residues" evidence="2">
    <location>
        <begin position="349"/>
        <end position="360"/>
    </location>
</feature>
<feature type="compositionally biased region" description="Acidic residues" evidence="2">
    <location>
        <begin position="378"/>
        <end position="387"/>
    </location>
</feature>
<feature type="binding site" evidence="1">
    <location>
        <begin position="80"/>
        <end position="87"/>
    </location>
    <ligand>
        <name>ATP</name>
        <dbReference type="ChEBI" id="CHEBI:30616"/>
    </ligand>
</feature>
<comment type="function">
    <text evidence="1">Can catalyze the hydrolysis of ATP in the presence of single-stranded DNA, the ATP-dependent uptake of single-stranded DNA by duplex DNA, and the ATP-dependent hybridization of homologous single-stranded DNAs. It interacts with LexA causing its activation and leading to its autocatalytic cleavage.</text>
</comment>
<comment type="subcellular location">
    <subcellularLocation>
        <location evidence="1">Cytoplasm</location>
    </subcellularLocation>
</comment>
<comment type="similarity">
    <text evidence="1">Belongs to the RecA family.</text>
</comment>
<dbReference type="EMBL" id="CP000425">
    <property type="protein sequence ID" value="ABJ72007.1"/>
    <property type="molecule type" value="Genomic_DNA"/>
</dbReference>
<dbReference type="RefSeq" id="WP_011675413.1">
    <property type="nucleotide sequence ID" value="NC_008527.1"/>
</dbReference>
<dbReference type="SMR" id="Q031W5"/>
<dbReference type="GeneID" id="61108677"/>
<dbReference type="KEGG" id="llc:LACR_0400"/>
<dbReference type="HOGENOM" id="CLU_040469_3_2_9"/>
<dbReference type="Proteomes" id="UP000000240">
    <property type="component" value="Chromosome"/>
</dbReference>
<dbReference type="GO" id="GO:0005829">
    <property type="term" value="C:cytosol"/>
    <property type="evidence" value="ECO:0007669"/>
    <property type="project" value="TreeGrafter"/>
</dbReference>
<dbReference type="GO" id="GO:0005524">
    <property type="term" value="F:ATP binding"/>
    <property type="evidence" value="ECO:0007669"/>
    <property type="project" value="UniProtKB-UniRule"/>
</dbReference>
<dbReference type="GO" id="GO:0016887">
    <property type="term" value="F:ATP hydrolysis activity"/>
    <property type="evidence" value="ECO:0007669"/>
    <property type="project" value="InterPro"/>
</dbReference>
<dbReference type="GO" id="GO:0140664">
    <property type="term" value="F:ATP-dependent DNA damage sensor activity"/>
    <property type="evidence" value="ECO:0007669"/>
    <property type="project" value="InterPro"/>
</dbReference>
<dbReference type="GO" id="GO:0003684">
    <property type="term" value="F:damaged DNA binding"/>
    <property type="evidence" value="ECO:0007669"/>
    <property type="project" value="UniProtKB-UniRule"/>
</dbReference>
<dbReference type="GO" id="GO:0003697">
    <property type="term" value="F:single-stranded DNA binding"/>
    <property type="evidence" value="ECO:0007669"/>
    <property type="project" value="UniProtKB-UniRule"/>
</dbReference>
<dbReference type="GO" id="GO:0006310">
    <property type="term" value="P:DNA recombination"/>
    <property type="evidence" value="ECO:0007669"/>
    <property type="project" value="UniProtKB-UniRule"/>
</dbReference>
<dbReference type="GO" id="GO:0006281">
    <property type="term" value="P:DNA repair"/>
    <property type="evidence" value="ECO:0007669"/>
    <property type="project" value="UniProtKB-UniRule"/>
</dbReference>
<dbReference type="GO" id="GO:0009432">
    <property type="term" value="P:SOS response"/>
    <property type="evidence" value="ECO:0007669"/>
    <property type="project" value="UniProtKB-UniRule"/>
</dbReference>
<dbReference type="CDD" id="cd00983">
    <property type="entry name" value="RecA"/>
    <property type="match status" value="1"/>
</dbReference>
<dbReference type="FunFam" id="3.40.50.300:FF:000087">
    <property type="entry name" value="Recombinase RecA"/>
    <property type="match status" value="1"/>
</dbReference>
<dbReference type="Gene3D" id="3.40.50.300">
    <property type="entry name" value="P-loop containing nucleotide triphosphate hydrolases"/>
    <property type="match status" value="1"/>
</dbReference>
<dbReference type="HAMAP" id="MF_00268">
    <property type="entry name" value="RecA"/>
    <property type="match status" value="1"/>
</dbReference>
<dbReference type="InterPro" id="IPR003593">
    <property type="entry name" value="AAA+_ATPase"/>
</dbReference>
<dbReference type="InterPro" id="IPR013765">
    <property type="entry name" value="DNA_recomb/repair_RecA"/>
</dbReference>
<dbReference type="InterPro" id="IPR020584">
    <property type="entry name" value="DNA_recomb/repair_RecA_CS"/>
</dbReference>
<dbReference type="InterPro" id="IPR027417">
    <property type="entry name" value="P-loop_NTPase"/>
</dbReference>
<dbReference type="InterPro" id="IPR049261">
    <property type="entry name" value="RecA-like_C"/>
</dbReference>
<dbReference type="InterPro" id="IPR049428">
    <property type="entry name" value="RecA-like_N"/>
</dbReference>
<dbReference type="InterPro" id="IPR020588">
    <property type="entry name" value="RecA_ATP-bd"/>
</dbReference>
<dbReference type="InterPro" id="IPR023400">
    <property type="entry name" value="RecA_C_sf"/>
</dbReference>
<dbReference type="InterPro" id="IPR020587">
    <property type="entry name" value="RecA_monomer-monomer_interface"/>
</dbReference>
<dbReference type="NCBIfam" id="TIGR02012">
    <property type="entry name" value="tigrfam_recA"/>
    <property type="match status" value="1"/>
</dbReference>
<dbReference type="PANTHER" id="PTHR45900:SF1">
    <property type="entry name" value="MITOCHONDRIAL DNA REPAIR PROTEIN RECA HOMOLOG-RELATED"/>
    <property type="match status" value="1"/>
</dbReference>
<dbReference type="PANTHER" id="PTHR45900">
    <property type="entry name" value="RECA"/>
    <property type="match status" value="1"/>
</dbReference>
<dbReference type="Pfam" id="PF00154">
    <property type="entry name" value="RecA"/>
    <property type="match status" value="1"/>
</dbReference>
<dbReference type="Pfam" id="PF21096">
    <property type="entry name" value="RecA_C"/>
    <property type="match status" value="1"/>
</dbReference>
<dbReference type="PRINTS" id="PR00142">
    <property type="entry name" value="RECA"/>
</dbReference>
<dbReference type="SMART" id="SM00382">
    <property type="entry name" value="AAA"/>
    <property type="match status" value="1"/>
</dbReference>
<dbReference type="SUPFAM" id="SSF52540">
    <property type="entry name" value="P-loop containing nucleoside triphosphate hydrolases"/>
    <property type="match status" value="1"/>
</dbReference>
<dbReference type="SUPFAM" id="SSF54752">
    <property type="entry name" value="RecA protein, C-terminal domain"/>
    <property type="match status" value="1"/>
</dbReference>
<dbReference type="PROSITE" id="PS00321">
    <property type="entry name" value="RECA_1"/>
    <property type="match status" value="1"/>
</dbReference>
<dbReference type="PROSITE" id="PS50162">
    <property type="entry name" value="RECA_2"/>
    <property type="match status" value="1"/>
</dbReference>
<dbReference type="PROSITE" id="PS50163">
    <property type="entry name" value="RECA_3"/>
    <property type="match status" value="1"/>
</dbReference>